<organism>
    <name type="scientific">Halocynthia roretzi</name>
    <name type="common">Sea squirt</name>
    <name type="synonym">Cynthia roretzi</name>
    <dbReference type="NCBI Taxonomy" id="7729"/>
    <lineage>
        <taxon>Eukaryota</taxon>
        <taxon>Metazoa</taxon>
        <taxon>Chordata</taxon>
        <taxon>Tunicata</taxon>
        <taxon>Ascidiacea</taxon>
        <taxon>Stolidobranchia</taxon>
        <taxon>Pyuridae</taxon>
        <taxon>Halocynthia</taxon>
    </lineage>
</organism>
<evidence type="ECO:0000250" key="1">
    <source>
        <dbReference type="UniProtKB" id="P68137"/>
    </source>
</evidence>
<evidence type="ECO:0000305" key="2"/>
<accession>P27130</accession>
<reference key="1">
    <citation type="journal article" date="1991" name="Dev. Growth Differ.">
        <title>Temporal and spatial expression of a muscle actin gene during embryogenesis of the ascidian Halocynthia roretzi.</title>
        <authorList>
            <person name="Kusakabe T."/>
            <person name="Suzuki J."/>
            <person name="Saiga H."/>
            <person name="Jeffery W.R."/>
            <person name="Makabe K.W."/>
            <person name="Satoh N."/>
        </authorList>
    </citation>
    <scope>NUCLEOTIDE SEQUENCE</scope>
</reference>
<name>ACT2_HALRO</name>
<dbReference type="EC" id="3.6.4.-" evidence="1"/>
<dbReference type="EMBL" id="D10067">
    <property type="protein sequence ID" value="BAA00956.1"/>
    <property type="molecule type" value="mRNA"/>
</dbReference>
<dbReference type="EMBL" id="D10886">
    <property type="protein sequence ID" value="BAA01708.1"/>
    <property type="molecule type" value="Genomic_DNA"/>
</dbReference>
<dbReference type="EMBL" id="D10887">
    <property type="protein sequence ID" value="BAA01709.1"/>
    <property type="molecule type" value="Genomic_DNA"/>
</dbReference>
<dbReference type="SMR" id="P27130"/>
<dbReference type="GO" id="GO:0005737">
    <property type="term" value="C:cytoplasm"/>
    <property type="evidence" value="ECO:0007669"/>
    <property type="project" value="UniProtKB-KW"/>
</dbReference>
<dbReference type="GO" id="GO:0005856">
    <property type="term" value="C:cytoskeleton"/>
    <property type="evidence" value="ECO:0007669"/>
    <property type="project" value="UniProtKB-SubCell"/>
</dbReference>
<dbReference type="GO" id="GO:0005524">
    <property type="term" value="F:ATP binding"/>
    <property type="evidence" value="ECO:0007669"/>
    <property type="project" value="UniProtKB-KW"/>
</dbReference>
<dbReference type="GO" id="GO:0016787">
    <property type="term" value="F:hydrolase activity"/>
    <property type="evidence" value="ECO:0007669"/>
    <property type="project" value="UniProtKB-KW"/>
</dbReference>
<dbReference type="CDD" id="cd10224">
    <property type="entry name" value="ASKHA_NBD_actin"/>
    <property type="match status" value="1"/>
</dbReference>
<dbReference type="FunFam" id="2.30.36.70:FF:000001">
    <property type="entry name" value="Actin, alpha skeletal muscle"/>
    <property type="match status" value="1"/>
</dbReference>
<dbReference type="FunFam" id="3.30.420.40:FF:000131">
    <property type="entry name" value="Actin, alpha skeletal muscle"/>
    <property type="match status" value="1"/>
</dbReference>
<dbReference type="FunFam" id="3.30.420.40:FF:000291">
    <property type="entry name" value="Actin, alpha skeletal muscle"/>
    <property type="match status" value="1"/>
</dbReference>
<dbReference type="FunFam" id="3.90.640.10:FF:000047">
    <property type="entry name" value="Actin, alpha skeletal muscle"/>
    <property type="match status" value="1"/>
</dbReference>
<dbReference type="FunFam" id="3.30.420.40:FF:000058">
    <property type="entry name" value="Putative actin-related protein 5"/>
    <property type="match status" value="1"/>
</dbReference>
<dbReference type="Gene3D" id="3.30.420.40">
    <property type="match status" value="2"/>
</dbReference>
<dbReference type="Gene3D" id="3.90.640.10">
    <property type="entry name" value="Actin, Chain A, domain 4"/>
    <property type="match status" value="1"/>
</dbReference>
<dbReference type="InterPro" id="IPR004000">
    <property type="entry name" value="Actin"/>
</dbReference>
<dbReference type="InterPro" id="IPR020902">
    <property type="entry name" value="Actin/actin-like_CS"/>
</dbReference>
<dbReference type="InterPro" id="IPR004001">
    <property type="entry name" value="Actin_CS"/>
</dbReference>
<dbReference type="InterPro" id="IPR043129">
    <property type="entry name" value="ATPase_NBD"/>
</dbReference>
<dbReference type="PANTHER" id="PTHR11937">
    <property type="entry name" value="ACTIN"/>
    <property type="match status" value="1"/>
</dbReference>
<dbReference type="Pfam" id="PF00022">
    <property type="entry name" value="Actin"/>
    <property type="match status" value="1"/>
</dbReference>
<dbReference type="PRINTS" id="PR00190">
    <property type="entry name" value="ACTIN"/>
</dbReference>
<dbReference type="SMART" id="SM00268">
    <property type="entry name" value="ACTIN"/>
    <property type="match status" value="1"/>
</dbReference>
<dbReference type="SUPFAM" id="SSF53067">
    <property type="entry name" value="Actin-like ATPase domain"/>
    <property type="match status" value="2"/>
</dbReference>
<dbReference type="PROSITE" id="PS00406">
    <property type="entry name" value="ACTINS_1"/>
    <property type="match status" value="1"/>
</dbReference>
<dbReference type="PROSITE" id="PS00432">
    <property type="entry name" value="ACTINS_2"/>
    <property type="match status" value="1"/>
</dbReference>
<dbReference type="PROSITE" id="PS01132">
    <property type="entry name" value="ACTINS_ACT_LIKE"/>
    <property type="match status" value="1"/>
</dbReference>
<protein>
    <recommendedName>
        <fullName>Actin, muscle 2/4/4A</fullName>
        <ecNumber evidence="1">3.6.4.-</ecNumber>
    </recommendedName>
</protein>
<keyword id="KW-0067">ATP-binding</keyword>
<keyword id="KW-0963">Cytoplasm</keyword>
<keyword id="KW-0206">Cytoskeleton</keyword>
<keyword id="KW-0378">Hydrolase</keyword>
<keyword id="KW-0514">Muscle protein</keyword>
<keyword id="KW-0547">Nucleotide-binding</keyword>
<proteinExistence type="evidence at transcript level"/>
<gene>
    <name type="primary">MA2</name>
</gene>
<gene>
    <name type="primary">MA4</name>
</gene>
<gene>
    <name type="primary">MA4A</name>
</gene>
<comment type="function">
    <text>Actins are highly conserved proteins that are involved in various types of cell motility and are ubiquitously expressed in all eukaryotic cells.</text>
</comment>
<comment type="function">
    <text>Multiple isoforms are involved in various cellular functions such as cytoskeleton structure, cell mobility, chromosome movement and muscle contraction.</text>
</comment>
<comment type="catalytic activity">
    <reaction evidence="1">
        <text>ATP + H2O = ADP + phosphate + H(+)</text>
        <dbReference type="Rhea" id="RHEA:13065"/>
        <dbReference type="ChEBI" id="CHEBI:15377"/>
        <dbReference type="ChEBI" id="CHEBI:15378"/>
        <dbReference type="ChEBI" id="CHEBI:30616"/>
        <dbReference type="ChEBI" id="CHEBI:43474"/>
        <dbReference type="ChEBI" id="CHEBI:456216"/>
    </reaction>
</comment>
<comment type="subcellular location">
    <subcellularLocation>
        <location>Cytoplasm</location>
        <location>Cytoskeleton</location>
    </subcellularLocation>
</comment>
<comment type="similarity">
    <text evidence="2">Belongs to the actin family.</text>
</comment>
<sequence>MSDGEEDTTAIVCDNGSGLVKSGFAGDDAPRAVFPSIVGRPRHQGVMVGMGQKDSYVGDEAQSKRGILTLKYPIEHGIITNWDDMEKIWHHTFYNELRVAPEEHPTLLTEAPLNPKANREKMTQIMFETFNVPAMYVAIQAVLSLYASGRTTGIVLDAGDGVSHNVPIYEGYALPHAIARLDLAGRDLTDYLMKILTERGYSFVTTAEREIVRDIKEKLCYVALDFEQEMATAASSTSLEKSYELPDGQVITIGNERFRCPETLFQPSFIGMESAGIHETTYNSIMKCDIDIRKDLYANNVLSGGTTMYPGIADRMQKEITALAPSTMKIKIIAPPERKYSVWIGGSILASLSTFQQMWISKQEYDEAGPSIVHRKCF</sequence>
<feature type="chain" id="PRO_0000088947" description="Actin, muscle 2/4/4A">
    <location>
        <begin position="1"/>
        <end position="378"/>
    </location>
</feature>